<protein>
    <recommendedName>
        <fullName evidence="1">Regulator of sigma D</fullName>
    </recommendedName>
</protein>
<evidence type="ECO:0000255" key="1">
    <source>
        <dbReference type="HAMAP-Rule" id="MF_01181"/>
    </source>
</evidence>
<comment type="function">
    <text evidence="1">Binds RpoD and negatively regulates RpoD-mediated transcription activation by preventing the interaction between the primary sigma factor RpoD with the catalytic core of the RNA polymerase and with promoter DNA. May be involved in replacement of the RNA polymerase sigma subunit from RpoD to RpoS during the transition from exponential growth to the stationary phase.</text>
</comment>
<comment type="subunit">
    <text evidence="1">Interacts with RpoD.</text>
</comment>
<comment type="subcellular location">
    <subcellularLocation>
        <location evidence="1">Cytoplasm</location>
    </subcellularLocation>
</comment>
<comment type="similarity">
    <text evidence="1">Belongs to the Rsd/AlgQ family.</text>
</comment>
<feature type="chain" id="PRO_1000138203" description="Regulator of sigma D">
    <location>
        <begin position="1"/>
        <end position="162"/>
    </location>
</feature>
<gene>
    <name evidence="1" type="primary">rsd</name>
    <name type="ordered locus">SSPA3717</name>
</gene>
<dbReference type="EMBL" id="FM200053">
    <property type="protein sequence ID" value="CAR62000.1"/>
    <property type="molecule type" value="Genomic_DNA"/>
</dbReference>
<dbReference type="RefSeq" id="WP_000934316.1">
    <property type="nucleotide sequence ID" value="NC_011147.1"/>
</dbReference>
<dbReference type="SMR" id="B5BJR4"/>
<dbReference type="KEGG" id="sek:SSPA3717"/>
<dbReference type="HOGENOM" id="CLU_142729_0_0_6"/>
<dbReference type="Proteomes" id="UP000001869">
    <property type="component" value="Chromosome"/>
</dbReference>
<dbReference type="GO" id="GO:0005737">
    <property type="term" value="C:cytoplasm"/>
    <property type="evidence" value="ECO:0007669"/>
    <property type="project" value="UniProtKB-SubCell"/>
</dbReference>
<dbReference type="GO" id="GO:0006355">
    <property type="term" value="P:regulation of DNA-templated transcription"/>
    <property type="evidence" value="ECO:0007669"/>
    <property type="project" value="InterPro"/>
</dbReference>
<dbReference type="FunFam" id="1.20.120.1370:FF:000001">
    <property type="entry name" value="Regulator of sigma D"/>
    <property type="match status" value="1"/>
</dbReference>
<dbReference type="Gene3D" id="1.20.120.1370">
    <property type="entry name" value="Regulator of RNA polymerase sigma(70) subunit, domain 4"/>
    <property type="match status" value="1"/>
</dbReference>
<dbReference type="HAMAP" id="MF_01181">
    <property type="entry name" value="Rsd"/>
    <property type="match status" value="1"/>
</dbReference>
<dbReference type="InterPro" id="IPR038309">
    <property type="entry name" value="Rsd/AlgQ_sf"/>
</dbReference>
<dbReference type="InterPro" id="IPR023785">
    <property type="entry name" value="Sigma70_reg_Rsd"/>
</dbReference>
<dbReference type="InterPro" id="IPR007448">
    <property type="entry name" value="Sigma70_reg_Rsd_AlgQ"/>
</dbReference>
<dbReference type="NCBIfam" id="NF008723">
    <property type="entry name" value="PRK11718.1"/>
    <property type="match status" value="1"/>
</dbReference>
<dbReference type="Pfam" id="PF04353">
    <property type="entry name" value="Rsd_AlgQ"/>
    <property type="match status" value="1"/>
</dbReference>
<dbReference type="PIRSF" id="PIRSF016548">
    <property type="entry name" value="Rsd_AlgQ"/>
    <property type="match status" value="1"/>
</dbReference>
<reference key="1">
    <citation type="journal article" date="2009" name="BMC Genomics">
        <title>Pseudogene accumulation in the evolutionary histories of Salmonella enterica serovars Paratyphi A and Typhi.</title>
        <authorList>
            <person name="Holt K.E."/>
            <person name="Thomson N.R."/>
            <person name="Wain J."/>
            <person name="Langridge G.C."/>
            <person name="Hasan R."/>
            <person name="Bhutta Z.A."/>
            <person name="Quail M.A."/>
            <person name="Norbertczak H."/>
            <person name="Walker D."/>
            <person name="Simmonds M."/>
            <person name="White B."/>
            <person name="Bason N."/>
            <person name="Mungall K."/>
            <person name="Dougan G."/>
            <person name="Parkhill J."/>
        </authorList>
    </citation>
    <scope>NUCLEOTIDE SEQUENCE [LARGE SCALE GENOMIC DNA]</scope>
    <source>
        <strain>AKU_12601</strain>
    </source>
</reference>
<name>RSD_SALPK</name>
<proteinExistence type="inferred from homology"/>
<organism>
    <name type="scientific">Salmonella paratyphi A (strain AKU_12601)</name>
    <dbReference type="NCBI Taxonomy" id="554290"/>
    <lineage>
        <taxon>Bacteria</taxon>
        <taxon>Pseudomonadati</taxon>
        <taxon>Pseudomonadota</taxon>
        <taxon>Gammaproteobacteria</taxon>
        <taxon>Enterobacterales</taxon>
        <taxon>Enterobacteriaceae</taxon>
        <taxon>Salmonella</taxon>
    </lineage>
</organism>
<keyword id="KW-0963">Cytoplasm</keyword>
<keyword id="KW-0804">Transcription</keyword>
<keyword id="KW-0805">Transcription regulation</keyword>
<sequence>MLNQLENLTERVGGSNKLVDRWLDVRKHLLVAYYNLVGIKPGKESYMRLNEKALDDFCQSLVDYLSAGHFSIYERILHKLEGNGQLLHAAKIWPLLEDNTQRIMDYYDTSLETAIDHDNRLEFQQALSDIGEALEARFVLEDKLIMLVFDAMHDGARVKRPA</sequence>
<accession>B5BJR4</accession>